<evidence type="ECO:0000250" key="1"/>
<evidence type="ECO:0000255" key="2"/>
<evidence type="ECO:0000305" key="3"/>
<gene>
    <name type="primary">MT-ND6</name>
    <name type="synonym">MTND6</name>
    <name type="synonym">NADH6</name>
    <name type="synonym">ND6</name>
</gene>
<reference key="1">
    <citation type="journal article" date="1994" name="Curr. Genet.">
        <title>Intragenic rearrangements in the mitochondrial NADH dehydrogenase subunit 6 gene of vertebrates.</title>
        <authorList>
            <person name="Moum T."/>
            <person name="Willassen N.P."/>
            <person name="Johansen S."/>
        </authorList>
    </citation>
    <scope>NUCLEOTIDE SEQUENCE [GENOMIC DNA]</scope>
</reference>
<dbReference type="EC" id="7.1.1.2"/>
<dbReference type="EMBL" id="X73922">
    <property type="protein sequence ID" value="CAA52127.1"/>
    <property type="molecule type" value="Genomic_DNA"/>
</dbReference>
<dbReference type="PIR" id="S44403">
    <property type="entry name" value="S44403"/>
</dbReference>
<dbReference type="SMR" id="P43194"/>
<dbReference type="GO" id="GO:0031966">
    <property type="term" value="C:mitochondrial membrane"/>
    <property type="evidence" value="ECO:0007669"/>
    <property type="project" value="UniProtKB-SubCell"/>
</dbReference>
<dbReference type="GO" id="GO:0008137">
    <property type="term" value="F:NADH dehydrogenase (ubiquinone) activity"/>
    <property type="evidence" value="ECO:0007669"/>
    <property type="project" value="UniProtKB-EC"/>
</dbReference>
<dbReference type="Gene3D" id="1.20.120.1200">
    <property type="entry name" value="NADH-ubiquinone/plastoquinone oxidoreductase chain 6, subunit NuoJ"/>
    <property type="match status" value="1"/>
</dbReference>
<dbReference type="InterPro" id="IPR050269">
    <property type="entry name" value="ComplexI_Subunit6"/>
</dbReference>
<dbReference type="InterPro" id="IPR001457">
    <property type="entry name" value="NADH_UbQ/plastoQ_OxRdtase_su6"/>
</dbReference>
<dbReference type="InterPro" id="IPR042106">
    <property type="entry name" value="Nuo/plastoQ_OxRdtase_6_NuoJ"/>
</dbReference>
<dbReference type="PANTHER" id="PTHR11435">
    <property type="entry name" value="NADH UBIQUINONE OXIDOREDUCTASE SUBUNIT ND6"/>
    <property type="match status" value="1"/>
</dbReference>
<dbReference type="PANTHER" id="PTHR11435:SF1">
    <property type="entry name" value="NADH-UBIQUINONE OXIDOREDUCTASE CHAIN 6"/>
    <property type="match status" value="1"/>
</dbReference>
<dbReference type="Pfam" id="PF00499">
    <property type="entry name" value="Oxidored_q3"/>
    <property type="match status" value="1"/>
</dbReference>
<comment type="function">
    <text evidence="1">Core subunit of the mitochondrial membrane respiratory chain NADH dehydrogenase (Complex I) that is believed to belong to the minimal assembly required for catalysis. Complex I functions in the transfer of electrons from NADH to the respiratory chain. The immediate electron acceptor for the enzyme is believed to be ubiquinone (By similarity).</text>
</comment>
<comment type="catalytic activity">
    <reaction>
        <text>a ubiquinone + NADH + 5 H(+)(in) = a ubiquinol + NAD(+) + 4 H(+)(out)</text>
        <dbReference type="Rhea" id="RHEA:29091"/>
        <dbReference type="Rhea" id="RHEA-COMP:9565"/>
        <dbReference type="Rhea" id="RHEA-COMP:9566"/>
        <dbReference type="ChEBI" id="CHEBI:15378"/>
        <dbReference type="ChEBI" id="CHEBI:16389"/>
        <dbReference type="ChEBI" id="CHEBI:17976"/>
        <dbReference type="ChEBI" id="CHEBI:57540"/>
        <dbReference type="ChEBI" id="CHEBI:57945"/>
        <dbReference type="EC" id="7.1.1.2"/>
    </reaction>
</comment>
<comment type="subcellular location">
    <subcellularLocation>
        <location evidence="3">Mitochondrion membrane</location>
        <topology evidence="3">Multi-pass membrane protein</topology>
    </subcellularLocation>
</comment>
<comment type="similarity">
    <text evidence="3">Belongs to the complex I subunit 6 family.</text>
</comment>
<sequence>MTYFVLFLGLCFVLGGLAVASNPSPYYGVVGLVLASVAGCGWFLSLGASFVSLVLFMVYLGGMLVVFVYSVSLAADPFPEAWGDWQVIGYGMGFAMVLVVGVVIGGFVESWNFGVVTVDSVGMFSVRLDFSGVAMFYSWGAGMFLVAGWGLLLTLFVVLELVRGLSRGAIRAV</sequence>
<proteinExistence type="inferred from homology"/>
<protein>
    <recommendedName>
        <fullName>NADH-ubiquinone oxidoreductase chain 6</fullName>
        <ecNumber>7.1.1.2</ecNumber>
    </recommendedName>
    <alternativeName>
        <fullName>NADH dehydrogenase subunit 6</fullName>
    </alternativeName>
</protein>
<geneLocation type="mitochondrion"/>
<feature type="chain" id="PRO_0000118249" description="NADH-ubiquinone oxidoreductase chain 6">
    <location>
        <begin position="1"/>
        <end position="173"/>
    </location>
</feature>
<feature type="transmembrane region" description="Helical" evidence="2">
    <location>
        <begin position="1"/>
        <end position="21"/>
    </location>
</feature>
<feature type="transmembrane region" description="Helical" evidence="2">
    <location>
        <begin position="27"/>
        <end position="47"/>
    </location>
</feature>
<feature type="transmembrane region" description="Helical" evidence="2">
    <location>
        <begin position="48"/>
        <end position="68"/>
    </location>
</feature>
<feature type="transmembrane region" description="Helical" evidence="2">
    <location>
        <begin position="87"/>
        <end position="107"/>
    </location>
</feature>
<feature type="transmembrane region" description="Helical" evidence="2">
    <location>
        <begin position="139"/>
        <end position="159"/>
    </location>
</feature>
<name>NU6M_BRABR</name>
<accession>P43194</accession>
<organism>
    <name type="scientific">Brachyramphus brevirostris</name>
    <name type="common">Kittlitz's murrelet</name>
    <name type="synonym">Uria brevirostris</name>
    <dbReference type="NCBI Taxonomy" id="28693"/>
    <lineage>
        <taxon>Eukaryota</taxon>
        <taxon>Metazoa</taxon>
        <taxon>Chordata</taxon>
        <taxon>Craniata</taxon>
        <taxon>Vertebrata</taxon>
        <taxon>Euteleostomi</taxon>
        <taxon>Archelosauria</taxon>
        <taxon>Archosauria</taxon>
        <taxon>Dinosauria</taxon>
        <taxon>Saurischia</taxon>
        <taxon>Theropoda</taxon>
        <taxon>Coelurosauria</taxon>
        <taxon>Aves</taxon>
        <taxon>Neognathae</taxon>
        <taxon>Neoaves</taxon>
        <taxon>Charadriiformes</taxon>
        <taxon>Alcidae</taxon>
        <taxon>Brachyramphus</taxon>
    </lineage>
</organism>
<keyword id="KW-0249">Electron transport</keyword>
<keyword id="KW-0472">Membrane</keyword>
<keyword id="KW-0496">Mitochondrion</keyword>
<keyword id="KW-0520">NAD</keyword>
<keyword id="KW-0679">Respiratory chain</keyword>
<keyword id="KW-1278">Translocase</keyword>
<keyword id="KW-0812">Transmembrane</keyword>
<keyword id="KW-1133">Transmembrane helix</keyword>
<keyword id="KW-0813">Transport</keyword>
<keyword id="KW-0830">Ubiquinone</keyword>